<gene>
    <name type="primary">PRM2</name>
</gene>
<dbReference type="EMBL" id="X71339">
    <property type="protein sequence ID" value="CAA50479.1"/>
    <property type="molecule type" value="Genomic_DNA"/>
</dbReference>
<dbReference type="PIR" id="S33335">
    <property type="entry name" value="S33335"/>
</dbReference>
<dbReference type="GO" id="GO:0000786">
    <property type="term" value="C:nucleosome"/>
    <property type="evidence" value="ECO:0007669"/>
    <property type="project" value="UniProtKB-KW"/>
</dbReference>
<dbReference type="GO" id="GO:0005634">
    <property type="term" value="C:nucleus"/>
    <property type="evidence" value="ECO:0007669"/>
    <property type="project" value="UniProtKB-SubCell"/>
</dbReference>
<dbReference type="GO" id="GO:0003677">
    <property type="term" value="F:DNA binding"/>
    <property type="evidence" value="ECO:0007669"/>
    <property type="project" value="UniProtKB-KW"/>
</dbReference>
<dbReference type="GO" id="GO:0030261">
    <property type="term" value="P:chromosome condensation"/>
    <property type="evidence" value="ECO:0007669"/>
    <property type="project" value="UniProtKB-KW"/>
</dbReference>
<dbReference type="GO" id="GO:0006997">
    <property type="term" value="P:nucleus organization"/>
    <property type="evidence" value="ECO:0007669"/>
    <property type="project" value="TreeGrafter"/>
</dbReference>
<dbReference type="GO" id="GO:0007286">
    <property type="term" value="P:spermatid development"/>
    <property type="evidence" value="ECO:0007669"/>
    <property type="project" value="InterPro"/>
</dbReference>
<dbReference type="GO" id="GO:0007283">
    <property type="term" value="P:spermatogenesis"/>
    <property type="evidence" value="ECO:0000250"/>
    <property type="project" value="UniProtKB"/>
</dbReference>
<dbReference type="InterPro" id="IPR000492">
    <property type="entry name" value="PRM2"/>
</dbReference>
<dbReference type="PANTHER" id="PTHR21341">
    <property type="entry name" value="PROTAMINE-2"/>
    <property type="match status" value="1"/>
</dbReference>
<dbReference type="PANTHER" id="PTHR21341:SF2">
    <property type="entry name" value="PROTAMINE-2"/>
    <property type="match status" value="1"/>
</dbReference>
<dbReference type="Pfam" id="PF00841">
    <property type="entry name" value="Protamine_P2"/>
    <property type="match status" value="1"/>
</dbReference>
<protein>
    <recommendedName>
        <fullName>Protamine-2</fullName>
    </recommendedName>
    <alternativeName>
        <fullName>Sperm histone P2</fullName>
    </alternativeName>
    <alternativeName>
        <fullName>Sperm protamine P2</fullName>
    </alternativeName>
</protein>
<feature type="chain" id="PRO_0000191600" description="Protamine-2">
    <location>
        <begin position="1"/>
        <end position="102"/>
    </location>
</feature>
<feature type="region of interest" description="Disordered" evidence="3">
    <location>
        <begin position="16"/>
        <end position="102"/>
    </location>
</feature>
<feature type="compositionally biased region" description="Basic residues" evidence="3">
    <location>
        <begin position="49"/>
        <end position="102"/>
    </location>
</feature>
<feature type="modified residue" description="Phosphoserine" evidence="2">
    <location>
        <position position="8"/>
    </location>
</feature>
<feature type="modified residue" description="Phosphoserine" evidence="2">
    <location>
        <position position="10"/>
    </location>
</feature>
<feature type="modified residue" description="Phosphoserine" evidence="2">
    <location>
        <position position="37"/>
    </location>
</feature>
<comment type="function">
    <text evidence="1">Protamines substitute for histones in the chromatin of sperm during the haploid phase of spermatogenesis. They compact sperm DNA into a highly condensed, stable and inactive complex.</text>
</comment>
<comment type="subunit">
    <text evidence="1">Interacts with TDRP.</text>
</comment>
<comment type="subcellular location">
    <subcellularLocation>
        <location evidence="1">Nucleus</location>
    </subcellularLocation>
    <subcellularLocation>
        <location evidence="1">Chromosome</location>
    </subcellularLocation>
</comment>
<comment type="tissue specificity">
    <text>Testis.</text>
</comment>
<comment type="PTM">
    <text evidence="1">Proteolytic processing into mature chains is required for histone eviction during spermatogenesis. Transition proteins (TNP1 and TNP2) are required for processing.</text>
</comment>
<comment type="similarity">
    <text evidence="4">Belongs to the protamine P2 family.</text>
</comment>
<sequence length="102" mass="12879">MVRYCVRSLSERSHEVYGQQLRGQEQGHHGQEEQGLSPEDVEVYERTHGHSHYRRRHCSRRRLHRIHRQQHRSCGRRRRRSCRQRRRHRRGCRTRRRRCRRH</sequence>
<name>PRM2_HYLLA</name>
<accession>P35314</accession>
<organism>
    <name type="scientific">Hylobates lar</name>
    <name type="common">Lar gibbon</name>
    <name type="synonym">White-handed gibbon</name>
    <dbReference type="NCBI Taxonomy" id="9580"/>
    <lineage>
        <taxon>Eukaryota</taxon>
        <taxon>Metazoa</taxon>
        <taxon>Chordata</taxon>
        <taxon>Craniata</taxon>
        <taxon>Vertebrata</taxon>
        <taxon>Euteleostomi</taxon>
        <taxon>Mammalia</taxon>
        <taxon>Eutheria</taxon>
        <taxon>Euarchontoglires</taxon>
        <taxon>Primates</taxon>
        <taxon>Haplorrhini</taxon>
        <taxon>Catarrhini</taxon>
        <taxon>Hylobatidae</taxon>
        <taxon>Hylobates</taxon>
    </lineage>
</organism>
<keyword id="KW-0158">Chromosome</keyword>
<keyword id="KW-0217">Developmental protein</keyword>
<keyword id="KW-0221">Differentiation</keyword>
<keyword id="KW-0226">DNA condensation</keyword>
<keyword id="KW-0238">DNA-binding</keyword>
<keyword id="KW-0544">Nucleosome core</keyword>
<keyword id="KW-0539">Nucleus</keyword>
<keyword id="KW-0597">Phosphoprotein</keyword>
<keyword id="KW-0744">Spermatogenesis</keyword>
<reference key="1">
    <citation type="journal article" date="1993" name="Eur. J. Biochem.">
        <title>Evolution of pro-protamine P2 genes in primates.</title>
        <authorList>
            <person name="Retief J.D."/>
            <person name="Dixon G.H."/>
        </authorList>
    </citation>
    <scope>NUCLEOTIDE SEQUENCE [GENOMIC DNA]</scope>
</reference>
<reference key="2">
    <citation type="journal article" date="1993" name="Eur. J. Biochem.">
        <authorList>
            <person name="Retief J.D."/>
            <person name="Dixon G.H."/>
        </authorList>
    </citation>
    <scope>ERRATUM OF PUBMED:8513810</scope>
</reference>
<evidence type="ECO:0000250" key="1">
    <source>
        <dbReference type="UniProtKB" id="P07978"/>
    </source>
</evidence>
<evidence type="ECO:0000250" key="2">
    <source>
        <dbReference type="UniProtKB" id="P11248"/>
    </source>
</evidence>
<evidence type="ECO:0000256" key="3">
    <source>
        <dbReference type="SAM" id="MobiDB-lite"/>
    </source>
</evidence>
<evidence type="ECO:0000305" key="4"/>
<proteinExistence type="evidence at transcript level"/>